<organism>
    <name type="scientific">Suid herpesvirus 1 (strain Rice)</name>
    <name type="common">SuHV-1</name>
    <name type="synonym">Pseudorabies virus (strain Rice)</name>
    <dbReference type="NCBI Taxonomy" id="10350"/>
    <lineage>
        <taxon>Viruses</taxon>
        <taxon>Duplodnaviria</taxon>
        <taxon>Heunggongvirae</taxon>
        <taxon>Peploviricota</taxon>
        <taxon>Herviviricetes</taxon>
        <taxon>Herpesvirales</taxon>
        <taxon>Orthoherpesviridae</taxon>
        <taxon>Alphaherpesvirinae</taxon>
        <taxon>Varicellovirus</taxon>
        <taxon>Varicellovirus suidalpha1</taxon>
        <taxon>Suid herpesvirus 1</taxon>
    </lineage>
</organism>
<dbReference type="EMBL" id="M14001">
    <property type="protein sequence ID" value="AAC35203.1"/>
    <property type="molecule type" value="Genomic_DNA"/>
</dbReference>
<dbReference type="PIR" id="A27788">
    <property type="entry name" value="VGBE50"/>
</dbReference>
<dbReference type="PDB" id="5X5V">
    <property type="method" value="X-ray"/>
    <property type="resolution" value="1.50 A"/>
    <property type="chains" value="A=1-402"/>
</dbReference>
<dbReference type="PDB" id="5X5W">
    <property type="method" value="X-ray"/>
    <property type="resolution" value="2.70 A"/>
    <property type="chains" value="A/C=1-402"/>
</dbReference>
<dbReference type="PDBsum" id="5X5V"/>
<dbReference type="PDBsum" id="5X5W"/>
<dbReference type="SMR" id="P07645"/>
<dbReference type="GO" id="GO:0016020">
    <property type="term" value="C:membrane"/>
    <property type="evidence" value="ECO:0007669"/>
    <property type="project" value="UniProtKB-KW"/>
</dbReference>
<dbReference type="GO" id="GO:0019031">
    <property type="term" value="C:viral envelope"/>
    <property type="evidence" value="ECO:0007669"/>
    <property type="project" value="UniProtKB-KW"/>
</dbReference>
<dbReference type="GO" id="GO:0055036">
    <property type="term" value="C:virion membrane"/>
    <property type="evidence" value="ECO:0000250"/>
    <property type="project" value="UniProt"/>
</dbReference>
<dbReference type="GO" id="GO:0048018">
    <property type="term" value="F:receptor ligand activity"/>
    <property type="evidence" value="ECO:0000314"/>
    <property type="project" value="UniProtKB"/>
</dbReference>
<dbReference type="GO" id="GO:0098670">
    <property type="term" value="P:entry receptor-mediated virion attachment to host cell"/>
    <property type="evidence" value="ECO:0007669"/>
    <property type="project" value="UniProtKB-KW"/>
</dbReference>
<dbReference type="GO" id="GO:0046718">
    <property type="term" value="P:symbiont entry into host cell"/>
    <property type="evidence" value="ECO:0000314"/>
    <property type="project" value="UniProtKB"/>
</dbReference>
<dbReference type="Gene3D" id="2.70.230.10">
    <property type="match status" value="1"/>
</dbReference>
<dbReference type="InterPro" id="IPR002896">
    <property type="entry name" value="Herpes_glycop_dom"/>
</dbReference>
<dbReference type="InterPro" id="IPR036179">
    <property type="entry name" value="Ig-like_dom_sf"/>
</dbReference>
<dbReference type="Pfam" id="PF01537">
    <property type="entry name" value="Herpes_glycop_D"/>
    <property type="match status" value="1"/>
</dbReference>
<dbReference type="SUPFAM" id="SSF48726">
    <property type="entry name" value="Immunoglobulin"/>
    <property type="match status" value="1"/>
</dbReference>
<organismHost>
    <name type="scientific">Sus scrofa</name>
    <name type="common">Pig</name>
    <dbReference type="NCBI Taxonomy" id="9823"/>
</organismHost>
<proteinExistence type="evidence at protein level"/>
<accession>P07645</accession>
<protein>
    <recommendedName>
        <fullName evidence="8">Envelope glycoprotein D</fullName>
        <shortName evidence="8">gD</shortName>
    </recommendedName>
    <alternativeName>
        <fullName>Protein gp50</fullName>
    </alternativeName>
</protein>
<comment type="function">
    <text evidence="1 5 7">Envelope glycoprotein that binds to the host cell entry receptor NECTIN1, promoting the virus entry into host cells (PubMed:28542478, PubMed:38030279). In contrast, does not use host TNFRSF14 as receptor (PubMed:28542478). May trigger fusion with host membrane, by recruiting the fusion machinery composed of gB and gH/gL (By similarity).</text>
</comment>
<comment type="subcellular location">
    <subcellularLocation>
        <location evidence="1">Virion membrane</location>
        <topology evidence="1">Single-pass type I membrane protein</topology>
    </subcellularLocation>
    <text evidence="2">During virion morphogenesis, this protein probably accumulates in the endosomes and trans-Golgi where secondary envelopment occurs.</text>
</comment>
<comment type="PTM">
    <text evidence="6">Not N-glycosylated.</text>
</comment>
<comment type="similarity">
    <text evidence="9">Belongs to the herpesviridae glycoprotein D family.</text>
</comment>
<reference key="1">
    <citation type="journal article" date="1986" name="J. Virol.">
        <title>DNA sequence of the gene for pseudorabies virus gp50, a glycoprotein without N-linked glycosylation.</title>
        <authorList>
            <person name="Petrovskis E.A."/>
            <person name="Timmins J.G."/>
            <person name="Armentrout M.A."/>
            <person name="Marchioli C.C."/>
            <person name="Yancey R.J. Jr."/>
            <person name="Post L.E."/>
        </authorList>
    </citation>
    <scope>NUCLEOTIDE SEQUENCE [GENOMIC DNA]</scope>
</reference>
<reference key="2">
    <citation type="journal article" date="2024" name="J. Vet. Med. Sci.">
        <title>Single amino acid mutation of nectin-1 provides remarkable resistance against lethal pseudorabies virus infection in mice.</title>
        <authorList>
            <person name="Tomioka Y."/>
            <person name="Takeda K."/>
            <person name="Ozaki K."/>
            <person name="Inoue H."/>
            <person name="Yamamoto S."/>
            <person name="Takeuchi T."/>
            <person name="Ono E."/>
        </authorList>
    </citation>
    <scope>FUNCTION</scope>
</reference>
<reference evidence="12 13" key="3">
    <citation type="journal article" date="2017" name="PLoS Pathog.">
        <title>Structural basis of nectin-1 recognition by pseudorabies virus glycoprotein D.</title>
        <authorList>
            <person name="Li A."/>
            <person name="Lu G."/>
            <person name="Qi J."/>
            <person name="Wu L."/>
            <person name="Tian K."/>
            <person name="Luo T."/>
            <person name="Shi Y."/>
            <person name="Yan J."/>
            <person name="Gao G.F."/>
        </authorList>
    </citation>
    <scope>X-RAY CRYSTALLOGRAPHY (1.50 ANGSTROMS) IN COMPLEX WITH HOST NECTIN1</scope>
    <scope>FUNCTION</scope>
    <scope>DISULFIDE BONDS</scope>
</reference>
<sequence>MLLAALLAALVARTTLGADVDAVPAPTFPPPAYPYTESWQLTLTTVPSPFVGPADVYHTRPLEDPCGVVALISDPQVDRLLNEAVAHRRPTYRAHVAWYRIADGCAHLLYFIEYADCDPRQVFGRCRRRTTPMWWTPSADYMFPTEDELGLLMVAPGRFNEGQYRRLVSVDGVNILTDFMVALPEGQECPFARVDQHRTYKFGACWSDDSFKRGVDVMRFLTPFYQQPPHREVVNYWYRKNGRTLPRAHAAATPYAIDPARPSAGSPRPRPRPRPRPRPKPEPAPATPAPPDRLPEPATRDHAAGGRPTPRPPRPETPHRPFAPPAVVPSGWPQPAEPFQPRTPAAPGVSRHRSVIVGTGTAMGALLVGVCVYIFFRLRGAKGYRLLGGPADADELKAQPGP</sequence>
<evidence type="ECO:0000250" key="1">
    <source>
        <dbReference type="UniProtKB" id="Q05059"/>
    </source>
</evidence>
<evidence type="ECO:0000250" key="2">
    <source>
        <dbReference type="UniProtKB" id="Q69091"/>
    </source>
</evidence>
<evidence type="ECO:0000255" key="3"/>
<evidence type="ECO:0000256" key="4">
    <source>
        <dbReference type="SAM" id="MobiDB-lite"/>
    </source>
</evidence>
<evidence type="ECO:0000269" key="5">
    <source>
    </source>
</evidence>
<evidence type="ECO:0000269" key="6">
    <source>
    </source>
</evidence>
<evidence type="ECO:0000269" key="7">
    <source>
    </source>
</evidence>
<evidence type="ECO:0000303" key="8">
    <source>
    </source>
</evidence>
<evidence type="ECO:0000305" key="9"/>
<evidence type="ECO:0007744" key="10">
    <source>
        <dbReference type="PDB" id="5X5V"/>
    </source>
</evidence>
<evidence type="ECO:0007744" key="11">
    <source>
        <dbReference type="PDB" id="5X5W"/>
    </source>
</evidence>
<evidence type="ECO:0007829" key="12">
    <source>
        <dbReference type="PDB" id="5X5V"/>
    </source>
</evidence>
<evidence type="ECO:0007829" key="13">
    <source>
        <dbReference type="PDB" id="5X5W"/>
    </source>
</evidence>
<name>GD_SUHVR</name>
<keyword id="KW-0002">3D-structure</keyword>
<keyword id="KW-1015">Disulfide bond</keyword>
<keyword id="KW-0325">Glycoprotein</keyword>
<keyword id="KW-0945">Host-virus interaction</keyword>
<keyword id="KW-0472">Membrane</keyword>
<keyword id="KW-0732">Signal</keyword>
<keyword id="KW-0812">Transmembrane</keyword>
<keyword id="KW-1133">Transmembrane helix</keyword>
<keyword id="KW-1161">Viral attachment to host cell</keyword>
<keyword id="KW-1234">Viral attachment to host entry receptor</keyword>
<keyword id="KW-0261">Viral envelope protein</keyword>
<keyword id="KW-0946">Virion</keyword>
<keyword id="KW-1160">Virus entry into host cell</keyword>
<feature type="signal peptide" evidence="3">
    <location>
        <begin position="1"/>
        <end position="17"/>
    </location>
</feature>
<feature type="chain" id="PRO_0000115764" description="Envelope glycoprotein D">
    <location>
        <begin position="18"/>
        <end position="402"/>
    </location>
</feature>
<feature type="transmembrane region" description="Helical" evidence="3">
    <location>
        <begin position="356"/>
        <end position="376"/>
    </location>
</feature>
<feature type="region of interest" description="Profusion" evidence="1">
    <location>
        <begin position="238"/>
        <end position="316"/>
    </location>
</feature>
<feature type="region of interest" description="Disordered" evidence="4">
    <location>
        <begin position="252"/>
        <end position="350"/>
    </location>
</feature>
<feature type="compositionally biased region" description="Basic residues" evidence="4">
    <location>
        <begin position="269"/>
        <end position="278"/>
    </location>
</feature>
<feature type="compositionally biased region" description="Pro residues" evidence="4">
    <location>
        <begin position="282"/>
        <end position="292"/>
    </location>
</feature>
<feature type="compositionally biased region" description="Basic and acidic residues" evidence="4">
    <location>
        <begin position="293"/>
        <end position="304"/>
    </location>
</feature>
<feature type="disulfide bond" evidence="5 10 11">
    <location>
        <begin position="66"/>
        <end position="189"/>
    </location>
</feature>
<feature type="disulfide bond" evidence="5 10 11">
    <location>
        <begin position="105"/>
        <end position="205"/>
    </location>
</feature>
<feature type="disulfide bond" evidence="5 10 11">
    <location>
        <begin position="117"/>
        <end position="126"/>
    </location>
</feature>
<feature type="strand" evidence="12">
    <location>
        <begin position="36"/>
        <end position="39"/>
    </location>
</feature>
<feature type="strand" evidence="12">
    <location>
        <begin position="55"/>
        <end position="58"/>
    </location>
</feature>
<feature type="strand" evidence="12">
    <location>
        <begin position="67"/>
        <end position="71"/>
    </location>
</feature>
<feature type="helix" evidence="12">
    <location>
        <begin position="78"/>
        <end position="86"/>
    </location>
</feature>
<feature type="strand" evidence="12">
    <location>
        <begin position="92"/>
        <end position="102"/>
    </location>
</feature>
<feature type="strand" evidence="12">
    <location>
        <begin position="105"/>
        <end position="117"/>
    </location>
</feature>
<feature type="strand" evidence="12">
    <location>
        <begin position="126"/>
        <end position="130"/>
    </location>
</feature>
<feature type="helix" evidence="12">
    <location>
        <begin position="136"/>
        <end position="139"/>
    </location>
</feature>
<feature type="strand" evidence="12">
    <location>
        <begin position="142"/>
        <end position="144"/>
    </location>
</feature>
<feature type="strand" evidence="12">
    <location>
        <begin position="148"/>
        <end position="155"/>
    </location>
</feature>
<feature type="helix" evidence="12">
    <location>
        <begin position="158"/>
        <end position="160"/>
    </location>
</feature>
<feature type="strand" evidence="12">
    <location>
        <begin position="162"/>
        <end position="170"/>
    </location>
</feature>
<feature type="strand" evidence="12">
    <location>
        <begin position="173"/>
        <end position="181"/>
    </location>
</feature>
<feature type="helix" evidence="12">
    <location>
        <begin position="195"/>
        <end position="200"/>
    </location>
</feature>
<feature type="helix" evidence="12">
    <location>
        <begin position="208"/>
        <end position="213"/>
    </location>
</feature>
<feature type="helix" evidence="12">
    <location>
        <begin position="217"/>
        <end position="220"/>
    </location>
</feature>
<feature type="strand" evidence="13">
    <location>
        <begin position="221"/>
        <end position="223"/>
    </location>
</feature>
<feature type="helix" evidence="12">
    <location>
        <begin position="227"/>
        <end position="240"/>
    </location>
</feature>
<feature type="strand" evidence="12">
    <location>
        <begin position="253"/>
        <end position="255"/>
    </location>
</feature>